<feature type="signal peptide" evidence="2">
    <location>
        <begin position="1"/>
        <end position="24"/>
    </location>
</feature>
<feature type="chain" id="PRO_0000382752" description="Serine/threonine-protein kinase-like protein At3g51990">
    <location>
        <begin position="25"/>
        <end position="362"/>
    </location>
</feature>
<feature type="domain" description="Protein kinase" evidence="3">
    <location>
        <begin position="59"/>
        <end position="329"/>
    </location>
</feature>
<feature type="region of interest" description="Disordered" evidence="5">
    <location>
        <begin position="21"/>
        <end position="43"/>
    </location>
</feature>
<feature type="compositionally biased region" description="Low complexity" evidence="5">
    <location>
        <begin position="21"/>
        <end position="32"/>
    </location>
</feature>
<feature type="active site" description="Proton acceptor" evidence="3 4">
    <location>
        <position position="185"/>
    </location>
</feature>
<feature type="binding site" evidence="3">
    <location>
        <begin position="65"/>
        <end position="73"/>
    </location>
    <ligand>
        <name>ATP</name>
        <dbReference type="ChEBI" id="CHEBI:30616"/>
    </ligand>
</feature>
<feature type="binding site" evidence="3">
    <location>
        <position position="86"/>
    </location>
    <ligand>
        <name>ATP</name>
        <dbReference type="ChEBI" id="CHEBI:30616"/>
    </ligand>
</feature>
<feature type="modified residue" description="Phosphoserine" evidence="1">
    <location>
        <position position="219"/>
    </location>
</feature>
<feature type="modified residue" description="Phosphothreonine" evidence="1">
    <location>
        <position position="220"/>
    </location>
</feature>
<feature type="modified residue" description="Phosphothreonine" evidence="1">
    <location>
        <position position="225"/>
    </location>
</feature>
<feature type="modified residue" description="Phosphotyrosine" evidence="1">
    <location>
        <position position="233"/>
    </location>
</feature>
<feature type="glycosylation site" description="N-linked (GlcNAc...) asparagine" evidence="2">
    <location>
        <position position="136"/>
    </location>
</feature>
<proteinExistence type="evidence at transcript level"/>
<protein>
    <recommendedName>
        <fullName>Serine/threonine-protein kinase-like protein At3g51990</fullName>
        <ecNumber>2.7.11.1</ecNumber>
    </recommendedName>
    <alternativeName>
        <fullName>CRINKLY 4-related kinase</fullName>
    </alternativeName>
</protein>
<reference key="1">
    <citation type="journal article" date="2000" name="Nature">
        <title>Sequence and analysis of chromosome 3 of the plant Arabidopsis thaliana.</title>
        <authorList>
            <person name="Salanoubat M."/>
            <person name="Lemcke K."/>
            <person name="Rieger M."/>
            <person name="Ansorge W."/>
            <person name="Unseld M."/>
            <person name="Fartmann B."/>
            <person name="Valle G."/>
            <person name="Bloecker H."/>
            <person name="Perez-Alonso M."/>
            <person name="Obermaier B."/>
            <person name="Delseny M."/>
            <person name="Boutry M."/>
            <person name="Grivell L.A."/>
            <person name="Mache R."/>
            <person name="Puigdomenech P."/>
            <person name="De Simone V."/>
            <person name="Choisne N."/>
            <person name="Artiguenave F."/>
            <person name="Robert C."/>
            <person name="Brottier P."/>
            <person name="Wincker P."/>
            <person name="Cattolico L."/>
            <person name="Weissenbach J."/>
            <person name="Saurin W."/>
            <person name="Quetier F."/>
            <person name="Schaefer M."/>
            <person name="Mueller-Auer S."/>
            <person name="Gabel C."/>
            <person name="Fuchs M."/>
            <person name="Benes V."/>
            <person name="Wurmbach E."/>
            <person name="Drzonek H."/>
            <person name="Erfle H."/>
            <person name="Jordan N."/>
            <person name="Bangert S."/>
            <person name="Wiedelmann R."/>
            <person name="Kranz H."/>
            <person name="Voss H."/>
            <person name="Holland R."/>
            <person name="Brandt P."/>
            <person name="Nyakatura G."/>
            <person name="Vezzi A."/>
            <person name="D'Angelo M."/>
            <person name="Pallavicini A."/>
            <person name="Toppo S."/>
            <person name="Simionati B."/>
            <person name="Conrad A."/>
            <person name="Hornischer K."/>
            <person name="Kauer G."/>
            <person name="Loehnert T.-H."/>
            <person name="Nordsiek G."/>
            <person name="Reichelt J."/>
            <person name="Scharfe M."/>
            <person name="Schoen O."/>
            <person name="Bargues M."/>
            <person name="Terol J."/>
            <person name="Climent J."/>
            <person name="Navarro P."/>
            <person name="Collado C."/>
            <person name="Perez-Perez A."/>
            <person name="Ottenwaelder B."/>
            <person name="Duchemin D."/>
            <person name="Cooke R."/>
            <person name="Laudie M."/>
            <person name="Berger-Llauro C."/>
            <person name="Purnelle B."/>
            <person name="Masuy D."/>
            <person name="de Haan M."/>
            <person name="Maarse A.C."/>
            <person name="Alcaraz J.-P."/>
            <person name="Cottet A."/>
            <person name="Casacuberta E."/>
            <person name="Monfort A."/>
            <person name="Argiriou A."/>
            <person name="Flores M."/>
            <person name="Liguori R."/>
            <person name="Vitale D."/>
            <person name="Mannhaupt G."/>
            <person name="Haase D."/>
            <person name="Schoof H."/>
            <person name="Rudd S."/>
            <person name="Zaccaria P."/>
            <person name="Mewes H.-W."/>
            <person name="Mayer K.F.X."/>
            <person name="Kaul S."/>
            <person name="Town C.D."/>
            <person name="Koo H.L."/>
            <person name="Tallon L.J."/>
            <person name="Jenkins J."/>
            <person name="Rooney T."/>
            <person name="Rizzo M."/>
            <person name="Walts A."/>
            <person name="Utterback T."/>
            <person name="Fujii C.Y."/>
            <person name="Shea T.P."/>
            <person name="Creasy T.H."/>
            <person name="Haas B."/>
            <person name="Maiti R."/>
            <person name="Wu D."/>
            <person name="Peterson J."/>
            <person name="Van Aken S."/>
            <person name="Pai G."/>
            <person name="Militscher J."/>
            <person name="Sellers P."/>
            <person name="Gill J.E."/>
            <person name="Feldblyum T.V."/>
            <person name="Preuss D."/>
            <person name="Lin X."/>
            <person name="Nierman W.C."/>
            <person name="Salzberg S.L."/>
            <person name="White O."/>
            <person name="Venter J.C."/>
            <person name="Fraser C.M."/>
            <person name="Kaneko T."/>
            <person name="Nakamura Y."/>
            <person name="Sato S."/>
            <person name="Kato T."/>
            <person name="Asamizu E."/>
            <person name="Sasamoto S."/>
            <person name="Kimura T."/>
            <person name="Idesawa K."/>
            <person name="Kawashima K."/>
            <person name="Kishida Y."/>
            <person name="Kiyokawa C."/>
            <person name="Kohara M."/>
            <person name="Matsumoto M."/>
            <person name="Matsuno A."/>
            <person name="Muraki A."/>
            <person name="Nakayama S."/>
            <person name="Nakazaki N."/>
            <person name="Shinpo S."/>
            <person name="Takeuchi C."/>
            <person name="Wada T."/>
            <person name="Watanabe A."/>
            <person name="Yamada M."/>
            <person name="Yasuda M."/>
            <person name="Tabata S."/>
        </authorList>
    </citation>
    <scope>NUCLEOTIDE SEQUENCE [LARGE SCALE GENOMIC DNA]</scope>
    <source>
        <strain>cv. Columbia</strain>
    </source>
</reference>
<reference key="2">
    <citation type="journal article" date="2017" name="Plant J.">
        <title>Araport11: a complete reannotation of the Arabidopsis thaliana reference genome.</title>
        <authorList>
            <person name="Cheng C.Y."/>
            <person name="Krishnakumar V."/>
            <person name="Chan A.P."/>
            <person name="Thibaud-Nissen F."/>
            <person name="Schobel S."/>
            <person name="Town C.D."/>
        </authorList>
    </citation>
    <scope>GENOME REANNOTATION</scope>
    <source>
        <strain>cv. Columbia</strain>
    </source>
</reference>
<reference key="3">
    <citation type="journal article" date="2003" name="Science">
        <title>Empirical analysis of transcriptional activity in the Arabidopsis genome.</title>
        <authorList>
            <person name="Yamada K."/>
            <person name="Lim J."/>
            <person name="Dale J.M."/>
            <person name="Chen H."/>
            <person name="Shinn P."/>
            <person name="Palm C.J."/>
            <person name="Southwick A.M."/>
            <person name="Wu H.C."/>
            <person name="Kim C.J."/>
            <person name="Nguyen M."/>
            <person name="Pham P.K."/>
            <person name="Cheuk R.F."/>
            <person name="Karlin-Newmann G."/>
            <person name="Liu S.X."/>
            <person name="Lam B."/>
            <person name="Sakano H."/>
            <person name="Wu T."/>
            <person name="Yu G."/>
            <person name="Miranda M."/>
            <person name="Quach H.L."/>
            <person name="Tripp M."/>
            <person name="Chang C.H."/>
            <person name="Lee J.M."/>
            <person name="Toriumi M.J."/>
            <person name="Chan M.M."/>
            <person name="Tang C.C."/>
            <person name="Onodera C.S."/>
            <person name="Deng J.M."/>
            <person name="Akiyama K."/>
            <person name="Ansari Y."/>
            <person name="Arakawa T."/>
            <person name="Banh J."/>
            <person name="Banno F."/>
            <person name="Bowser L."/>
            <person name="Brooks S.Y."/>
            <person name="Carninci P."/>
            <person name="Chao Q."/>
            <person name="Choy N."/>
            <person name="Enju A."/>
            <person name="Goldsmith A.D."/>
            <person name="Gurjal M."/>
            <person name="Hansen N.F."/>
            <person name="Hayashizaki Y."/>
            <person name="Johnson-Hopson C."/>
            <person name="Hsuan V.W."/>
            <person name="Iida K."/>
            <person name="Karnes M."/>
            <person name="Khan S."/>
            <person name="Koesema E."/>
            <person name="Ishida J."/>
            <person name="Jiang P.X."/>
            <person name="Jones T."/>
            <person name="Kawai J."/>
            <person name="Kamiya A."/>
            <person name="Meyers C."/>
            <person name="Nakajima M."/>
            <person name="Narusaka M."/>
            <person name="Seki M."/>
            <person name="Sakurai T."/>
            <person name="Satou M."/>
            <person name="Tamse R."/>
            <person name="Vaysberg M."/>
            <person name="Wallender E.K."/>
            <person name="Wong C."/>
            <person name="Yamamura Y."/>
            <person name="Yuan S."/>
            <person name="Shinozaki K."/>
            <person name="Davis R.W."/>
            <person name="Theologis A."/>
            <person name="Ecker J.R."/>
        </authorList>
    </citation>
    <scope>NUCLEOTIDE SEQUENCE [LARGE SCALE MRNA]</scope>
    <source>
        <strain>cv. Columbia</strain>
    </source>
</reference>
<reference key="4">
    <citation type="journal article" date="2009" name="Mol. Plant">
        <title>Diverse transcriptional programs associated with environmental stress and hormones in the Arabidopsis receptor-like kinase gene family.</title>
        <authorList>
            <person name="Chae L."/>
            <person name="Sudat S."/>
            <person name="Dudoit S."/>
            <person name="Zhu T."/>
            <person name="Luan S."/>
        </authorList>
    </citation>
    <scope>GENE FAMILY</scope>
</reference>
<keyword id="KW-0067">ATP-binding</keyword>
<keyword id="KW-0325">Glycoprotein</keyword>
<keyword id="KW-0418">Kinase</keyword>
<keyword id="KW-0547">Nucleotide-binding</keyword>
<keyword id="KW-0597">Phosphoprotein</keyword>
<keyword id="KW-0675">Receptor</keyword>
<keyword id="KW-1185">Reference proteome</keyword>
<keyword id="KW-0964">Secreted</keyword>
<keyword id="KW-0723">Serine/threonine-protein kinase</keyword>
<keyword id="KW-0732">Signal</keyword>
<keyword id="KW-0808">Transferase</keyword>
<evidence type="ECO:0000250" key="1">
    <source>
        <dbReference type="UniProtKB" id="O48814"/>
    </source>
</evidence>
<evidence type="ECO:0000255" key="2"/>
<evidence type="ECO:0000255" key="3">
    <source>
        <dbReference type="PROSITE-ProRule" id="PRU00159"/>
    </source>
</evidence>
<evidence type="ECO:0000255" key="4">
    <source>
        <dbReference type="PROSITE-ProRule" id="PRU10027"/>
    </source>
</evidence>
<evidence type="ECO:0000256" key="5">
    <source>
        <dbReference type="SAM" id="MobiDB-lite"/>
    </source>
</evidence>
<evidence type="ECO:0000305" key="6"/>
<sequence>MGYLSCKAGSAVAIAVSSAASTSGSTSSKASAPPESPIEDRPRLRRFLHRDLESATGGFDINNLLGRGSHGSVYKAVIGSRHIAVKRPSKSREISREFHNEFEILSRIRSPRFVNLLGFSADNSKEPLLVVEFMGNGSLYDVIHSDTVLNSGAISSWSKRIKIALQIAKAVHLLHSQETPIIHRDIKSANVLMDKNLNAKLGDFGLAIRCNVDDQKVKSTPPAGTMGYLDPDYVTADRLSTKTDVFSFGILLLEIISGRKAIDVRYSPSFIVDWAIPMIKRGKIGGIYDPRIGPPIDVSVRNHLGLVAAKCVRTCREKRPGMEEVVGWLTGLTKSVRSRRWDELSIGNPCMMVETVGGRPVE</sequence>
<gene>
    <name type="ordered locus">At3g51990</name>
    <name type="ORF">F4F15.100</name>
</gene>
<organism>
    <name type="scientific">Arabidopsis thaliana</name>
    <name type="common">Mouse-ear cress</name>
    <dbReference type="NCBI Taxonomy" id="3702"/>
    <lineage>
        <taxon>Eukaryota</taxon>
        <taxon>Viridiplantae</taxon>
        <taxon>Streptophyta</taxon>
        <taxon>Embryophyta</taxon>
        <taxon>Tracheophyta</taxon>
        <taxon>Spermatophyta</taxon>
        <taxon>Magnoliopsida</taxon>
        <taxon>eudicotyledons</taxon>
        <taxon>Gunneridae</taxon>
        <taxon>Pentapetalae</taxon>
        <taxon>rosids</taxon>
        <taxon>malvids</taxon>
        <taxon>Brassicales</taxon>
        <taxon>Brassicaceae</taxon>
        <taxon>Camelineae</taxon>
        <taxon>Arabidopsis</taxon>
    </lineage>
</organism>
<comment type="catalytic activity">
    <reaction>
        <text>L-seryl-[protein] + ATP = O-phospho-L-seryl-[protein] + ADP + H(+)</text>
        <dbReference type="Rhea" id="RHEA:17989"/>
        <dbReference type="Rhea" id="RHEA-COMP:9863"/>
        <dbReference type="Rhea" id="RHEA-COMP:11604"/>
        <dbReference type="ChEBI" id="CHEBI:15378"/>
        <dbReference type="ChEBI" id="CHEBI:29999"/>
        <dbReference type="ChEBI" id="CHEBI:30616"/>
        <dbReference type="ChEBI" id="CHEBI:83421"/>
        <dbReference type="ChEBI" id="CHEBI:456216"/>
        <dbReference type="EC" id="2.7.11.1"/>
    </reaction>
</comment>
<comment type="catalytic activity">
    <reaction>
        <text>L-threonyl-[protein] + ATP = O-phospho-L-threonyl-[protein] + ADP + H(+)</text>
        <dbReference type="Rhea" id="RHEA:46608"/>
        <dbReference type="Rhea" id="RHEA-COMP:11060"/>
        <dbReference type="Rhea" id="RHEA-COMP:11605"/>
        <dbReference type="ChEBI" id="CHEBI:15378"/>
        <dbReference type="ChEBI" id="CHEBI:30013"/>
        <dbReference type="ChEBI" id="CHEBI:30616"/>
        <dbReference type="ChEBI" id="CHEBI:61977"/>
        <dbReference type="ChEBI" id="CHEBI:456216"/>
        <dbReference type="EC" id="2.7.11.1"/>
    </reaction>
</comment>
<comment type="subcellular location">
    <subcellularLocation>
        <location evidence="6">Secreted</location>
    </subcellularLocation>
</comment>
<comment type="similarity">
    <text evidence="3">Belongs to the protein kinase superfamily. Ser/Thr protein kinase family.</text>
</comment>
<name>CCR35_ARATH</name>
<dbReference type="EC" id="2.7.11.1"/>
<dbReference type="EMBL" id="AL049711">
    <property type="protein sequence ID" value="CAB41319.1"/>
    <property type="molecule type" value="Genomic_DNA"/>
</dbReference>
<dbReference type="EMBL" id="CP002686">
    <property type="protein sequence ID" value="AEE78872.1"/>
    <property type="molecule type" value="Genomic_DNA"/>
</dbReference>
<dbReference type="EMBL" id="AY059817">
    <property type="protein sequence ID" value="AAL24299.1"/>
    <property type="molecule type" value="mRNA"/>
</dbReference>
<dbReference type="EMBL" id="AY081544">
    <property type="protein sequence ID" value="AAM10106.1"/>
    <property type="molecule type" value="mRNA"/>
</dbReference>
<dbReference type="PIR" id="T49078">
    <property type="entry name" value="T49078"/>
</dbReference>
<dbReference type="RefSeq" id="NP_190767.1">
    <property type="nucleotide sequence ID" value="NM_115058.3"/>
</dbReference>
<dbReference type="SMR" id="Q9SV05"/>
<dbReference type="FunCoup" id="Q9SV05">
    <property type="interactions" value="1109"/>
</dbReference>
<dbReference type="STRING" id="3702.Q9SV05"/>
<dbReference type="GlyGen" id="Q9SV05">
    <property type="glycosylation" value="1 site"/>
</dbReference>
<dbReference type="PaxDb" id="3702-AT3G51990.1"/>
<dbReference type="ProteomicsDB" id="223896"/>
<dbReference type="EnsemblPlants" id="AT3G51990.1">
    <property type="protein sequence ID" value="AT3G51990.1"/>
    <property type="gene ID" value="AT3G51990"/>
</dbReference>
<dbReference type="GeneID" id="824362"/>
<dbReference type="Gramene" id="AT3G51990.1">
    <property type="protein sequence ID" value="AT3G51990.1"/>
    <property type="gene ID" value="AT3G51990"/>
</dbReference>
<dbReference type="KEGG" id="ath:AT3G51990"/>
<dbReference type="Araport" id="AT3G51990"/>
<dbReference type="TAIR" id="AT3G51990"/>
<dbReference type="eggNOG" id="KOG1187">
    <property type="taxonomic scope" value="Eukaryota"/>
</dbReference>
<dbReference type="HOGENOM" id="CLU_000288_21_4_1"/>
<dbReference type="InParanoid" id="Q9SV05"/>
<dbReference type="OMA" id="KPIKIQH"/>
<dbReference type="PhylomeDB" id="Q9SV05"/>
<dbReference type="PRO" id="PR:Q9SV05"/>
<dbReference type="Proteomes" id="UP000006548">
    <property type="component" value="Chromosome 3"/>
</dbReference>
<dbReference type="ExpressionAtlas" id="Q9SV05">
    <property type="expression patterns" value="baseline and differential"/>
</dbReference>
<dbReference type="GO" id="GO:0005576">
    <property type="term" value="C:extracellular region"/>
    <property type="evidence" value="ECO:0007669"/>
    <property type="project" value="UniProtKB-SubCell"/>
</dbReference>
<dbReference type="GO" id="GO:0005524">
    <property type="term" value="F:ATP binding"/>
    <property type="evidence" value="ECO:0007669"/>
    <property type="project" value="UniProtKB-KW"/>
</dbReference>
<dbReference type="GO" id="GO:0106310">
    <property type="term" value="F:protein serine kinase activity"/>
    <property type="evidence" value="ECO:0007669"/>
    <property type="project" value="RHEA"/>
</dbReference>
<dbReference type="GO" id="GO:0004674">
    <property type="term" value="F:protein serine/threonine kinase activity"/>
    <property type="evidence" value="ECO:0007669"/>
    <property type="project" value="UniProtKB-KW"/>
</dbReference>
<dbReference type="FunFam" id="1.10.510.10:FF:000540">
    <property type="entry name" value="Serine/threonine-protein kinase-like protein"/>
    <property type="match status" value="1"/>
</dbReference>
<dbReference type="Gene3D" id="3.30.200.20">
    <property type="entry name" value="Phosphorylase Kinase, domain 1"/>
    <property type="match status" value="1"/>
</dbReference>
<dbReference type="Gene3D" id="1.10.510.10">
    <property type="entry name" value="Transferase(Phosphotransferase) domain 1"/>
    <property type="match status" value="1"/>
</dbReference>
<dbReference type="InterPro" id="IPR011009">
    <property type="entry name" value="Kinase-like_dom_sf"/>
</dbReference>
<dbReference type="InterPro" id="IPR000719">
    <property type="entry name" value="Prot_kinase_dom"/>
</dbReference>
<dbReference type="InterPro" id="IPR017441">
    <property type="entry name" value="Protein_kinase_ATP_BS"/>
</dbReference>
<dbReference type="InterPro" id="IPR008271">
    <property type="entry name" value="Ser/Thr_kinase_AS"/>
</dbReference>
<dbReference type="PANTHER" id="PTHR46146:SF23">
    <property type="entry name" value="PROTEIN KINASE DOMAIN-CONTAINING PROTEIN"/>
    <property type="match status" value="1"/>
</dbReference>
<dbReference type="PANTHER" id="PTHR46146">
    <property type="entry name" value="SERINE/THREONINE-PROTEIN KINASE-LIKE PROTEIN CCR4"/>
    <property type="match status" value="1"/>
</dbReference>
<dbReference type="Pfam" id="PF00069">
    <property type="entry name" value="Pkinase"/>
    <property type="match status" value="1"/>
</dbReference>
<dbReference type="PIRSF" id="PIRSF000654">
    <property type="entry name" value="Integrin-linked_kinase"/>
    <property type="match status" value="1"/>
</dbReference>
<dbReference type="SMART" id="SM00220">
    <property type="entry name" value="S_TKc"/>
    <property type="match status" value="1"/>
</dbReference>
<dbReference type="SUPFAM" id="SSF56112">
    <property type="entry name" value="Protein kinase-like (PK-like)"/>
    <property type="match status" value="1"/>
</dbReference>
<dbReference type="PROSITE" id="PS00107">
    <property type="entry name" value="PROTEIN_KINASE_ATP"/>
    <property type="match status" value="1"/>
</dbReference>
<dbReference type="PROSITE" id="PS50011">
    <property type="entry name" value="PROTEIN_KINASE_DOM"/>
    <property type="match status" value="1"/>
</dbReference>
<dbReference type="PROSITE" id="PS00108">
    <property type="entry name" value="PROTEIN_KINASE_ST"/>
    <property type="match status" value="1"/>
</dbReference>
<accession>Q9SV05</accession>